<gene>
    <name evidence="1" type="primary">infA3</name>
    <name type="ordered locus">Bcen_5094</name>
</gene>
<protein>
    <recommendedName>
        <fullName evidence="1">Translation initiation factor IF-1 3</fullName>
    </recommendedName>
</protein>
<dbReference type="EMBL" id="CP000379">
    <property type="protein sequence ID" value="ABF79968.1"/>
    <property type="molecule type" value="Genomic_DNA"/>
</dbReference>
<dbReference type="SMR" id="Q1BK87"/>
<dbReference type="HOGENOM" id="CLU_151267_4_1_4"/>
<dbReference type="GO" id="GO:0005829">
    <property type="term" value="C:cytosol"/>
    <property type="evidence" value="ECO:0007669"/>
    <property type="project" value="TreeGrafter"/>
</dbReference>
<dbReference type="GO" id="GO:0043022">
    <property type="term" value="F:ribosome binding"/>
    <property type="evidence" value="ECO:0007669"/>
    <property type="project" value="UniProtKB-UniRule"/>
</dbReference>
<dbReference type="GO" id="GO:0019843">
    <property type="term" value="F:rRNA binding"/>
    <property type="evidence" value="ECO:0007669"/>
    <property type="project" value="UniProtKB-UniRule"/>
</dbReference>
<dbReference type="GO" id="GO:0003743">
    <property type="term" value="F:translation initiation factor activity"/>
    <property type="evidence" value="ECO:0007669"/>
    <property type="project" value="UniProtKB-UniRule"/>
</dbReference>
<dbReference type="CDD" id="cd04451">
    <property type="entry name" value="S1_IF1"/>
    <property type="match status" value="1"/>
</dbReference>
<dbReference type="FunFam" id="2.40.50.140:FF:000002">
    <property type="entry name" value="Translation initiation factor IF-1"/>
    <property type="match status" value="1"/>
</dbReference>
<dbReference type="Gene3D" id="2.40.50.140">
    <property type="entry name" value="Nucleic acid-binding proteins"/>
    <property type="match status" value="1"/>
</dbReference>
<dbReference type="HAMAP" id="MF_00075">
    <property type="entry name" value="IF_1"/>
    <property type="match status" value="1"/>
</dbReference>
<dbReference type="InterPro" id="IPR012340">
    <property type="entry name" value="NA-bd_OB-fold"/>
</dbReference>
<dbReference type="InterPro" id="IPR006196">
    <property type="entry name" value="RNA-binding_domain_S1_IF1"/>
</dbReference>
<dbReference type="InterPro" id="IPR004368">
    <property type="entry name" value="TIF_IF1"/>
</dbReference>
<dbReference type="NCBIfam" id="TIGR00008">
    <property type="entry name" value="infA"/>
    <property type="match status" value="1"/>
</dbReference>
<dbReference type="PANTHER" id="PTHR33370">
    <property type="entry name" value="TRANSLATION INITIATION FACTOR IF-1, CHLOROPLASTIC"/>
    <property type="match status" value="1"/>
</dbReference>
<dbReference type="PANTHER" id="PTHR33370:SF1">
    <property type="entry name" value="TRANSLATION INITIATION FACTOR IF-1, CHLOROPLASTIC"/>
    <property type="match status" value="1"/>
</dbReference>
<dbReference type="Pfam" id="PF01176">
    <property type="entry name" value="eIF-1a"/>
    <property type="match status" value="1"/>
</dbReference>
<dbReference type="SUPFAM" id="SSF50249">
    <property type="entry name" value="Nucleic acid-binding proteins"/>
    <property type="match status" value="1"/>
</dbReference>
<dbReference type="PROSITE" id="PS50832">
    <property type="entry name" value="S1_IF1_TYPE"/>
    <property type="match status" value="1"/>
</dbReference>
<evidence type="ECO:0000255" key="1">
    <source>
        <dbReference type="HAMAP-Rule" id="MF_00075"/>
    </source>
</evidence>
<sequence length="88" mass="10065">MAKEELLELDGVVDEVLPDSRFRVTLENGAVVAAYASGRMRKHRIRILAGDRVKLELSVYDLTKGCINFRHKDERASPGVPRNRFVRR</sequence>
<proteinExistence type="inferred from homology"/>
<name>IF13_BURO1</name>
<reference key="1">
    <citation type="submission" date="2006-05" db="EMBL/GenBank/DDBJ databases">
        <title>Complete sequence of chromosome 2 of Burkholderia cenocepacia AU 1054.</title>
        <authorList>
            <consortium name="US DOE Joint Genome Institute"/>
            <person name="Copeland A."/>
            <person name="Lucas S."/>
            <person name="Lapidus A."/>
            <person name="Barry K."/>
            <person name="Detter J.C."/>
            <person name="Glavina del Rio T."/>
            <person name="Hammon N."/>
            <person name="Israni S."/>
            <person name="Dalin E."/>
            <person name="Tice H."/>
            <person name="Pitluck S."/>
            <person name="Chain P."/>
            <person name="Malfatti S."/>
            <person name="Shin M."/>
            <person name="Vergez L."/>
            <person name="Schmutz J."/>
            <person name="Larimer F."/>
            <person name="Land M."/>
            <person name="Hauser L."/>
            <person name="Kyrpides N."/>
            <person name="Lykidis A."/>
            <person name="LiPuma J.J."/>
            <person name="Konstantinidis K."/>
            <person name="Tiedje J.M."/>
            <person name="Richardson P."/>
        </authorList>
    </citation>
    <scope>NUCLEOTIDE SEQUENCE [LARGE SCALE GENOMIC DNA]</scope>
    <source>
        <strain>AU 1054</strain>
    </source>
</reference>
<keyword id="KW-0963">Cytoplasm</keyword>
<keyword id="KW-0396">Initiation factor</keyword>
<keyword id="KW-0648">Protein biosynthesis</keyword>
<keyword id="KW-0694">RNA-binding</keyword>
<keyword id="KW-0699">rRNA-binding</keyword>
<comment type="function">
    <text evidence="1">One of the essential components for the initiation of protein synthesis. Stabilizes the binding of IF-2 and IF-3 on the 30S subunit to which N-formylmethionyl-tRNA(fMet) subsequently binds. Helps modulate mRNA selection, yielding the 30S pre-initiation complex (PIC). Upon addition of the 50S ribosomal subunit IF-1, IF-2 and IF-3 are released leaving the mature 70S translation initiation complex.</text>
</comment>
<comment type="subunit">
    <text evidence="1">Component of the 30S ribosomal translation pre-initiation complex which assembles on the 30S ribosome in the order IF-2 and IF-3, IF-1 and N-formylmethionyl-tRNA(fMet); mRNA recruitment can occur at any time during PIC assembly.</text>
</comment>
<comment type="subcellular location">
    <subcellularLocation>
        <location evidence="1">Cytoplasm</location>
    </subcellularLocation>
</comment>
<comment type="similarity">
    <text evidence="1">Belongs to the IF-1 family.</text>
</comment>
<feature type="chain" id="PRO_0000263772" description="Translation initiation factor IF-1 3">
    <location>
        <begin position="1"/>
        <end position="88"/>
    </location>
</feature>
<feature type="domain" description="S1-like" evidence="1">
    <location>
        <begin position="1"/>
        <end position="72"/>
    </location>
</feature>
<accession>Q1BK87</accession>
<organism>
    <name type="scientific">Burkholderia orbicola (strain AU 1054)</name>
    <dbReference type="NCBI Taxonomy" id="331271"/>
    <lineage>
        <taxon>Bacteria</taxon>
        <taxon>Pseudomonadati</taxon>
        <taxon>Pseudomonadota</taxon>
        <taxon>Betaproteobacteria</taxon>
        <taxon>Burkholderiales</taxon>
        <taxon>Burkholderiaceae</taxon>
        <taxon>Burkholderia</taxon>
        <taxon>Burkholderia cepacia complex</taxon>
        <taxon>Burkholderia orbicola</taxon>
    </lineage>
</organism>